<proteinExistence type="inferred from homology"/>
<protein>
    <recommendedName>
        <fullName>Cellodextrinase A</fullName>
        <ecNumber>3.2.1.-</ecNumber>
    </recommendedName>
</protein>
<sequence length="336" mass="38687">MLKSRGIIKGINLGGWMSQCDYSRERLDNFVKENDIKQIADWGFDHVRLPIDYNIVQNNDGSVIEDGYNRIDKVVELCRKYGLKLVIDLHKTAGFSFDFGEPESGFFDNKEYQERFYILWEEIARRYGHDTDNIVFELLNEVTDEAFIGKWNEISDICIGRIRKIAPEVIILLGSYHNNAADTVQFLNAPHDDRVVYNFHCYEPLKFTHQGATWTPDIIPGERMKFEDSETSEAYFEELFSTAISTAEKYGTTLYCGEYGVIDVVSAEDSLKWFKVINKVFSKHGISRECGITRKWTSAFPTASTTATVRDTEVSVIKTRKAHNCCTLTEVFTRVY</sequence>
<dbReference type="EC" id="3.2.1.-"/>
<dbReference type="EMBL" id="X51944">
    <property type="protein sequence ID" value="CAA36207.1"/>
    <property type="molecule type" value="Genomic_DNA"/>
</dbReference>
<dbReference type="SMR" id="P16169"/>
<dbReference type="CAZy" id="GH5">
    <property type="family name" value="Glycoside Hydrolase Family 5"/>
</dbReference>
<dbReference type="eggNOG" id="COG2730">
    <property type="taxonomic scope" value="Bacteria"/>
</dbReference>
<dbReference type="GO" id="GO:0009986">
    <property type="term" value="C:cell surface"/>
    <property type="evidence" value="ECO:0007669"/>
    <property type="project" value="TreeGrafter"/>
</dbReference>
<dbReference type="GO" id="GO:0005576">
    <property type="term" value="C:extracellular region"/>
    <property type="evidence" value="ECO:0007669"/>
    <property type="project" value="UniProtKB-SubCell"/>
</dbReference>
<dbReference type="GO" id="GO:0008422">
    <property type="term" value="F:beta-glucosidase activity"/>
    <property type="evidence" value="ECO:0007669"/>
    <property type="project" value="TreeGrafter"/>
</dbReference>
<dbReference type="GO" id="GO:0030245">
    <property type="term" value="P:cellulose catabolic process"/>
    <property type="evidence" value="ECO:0007669"/>
    <property type="project" value="UniProtKB-KW"/>
</dbReference>
<dbReference type="Gene3D" id="3.20.20.80">
    <property type="entry name" value="Glycosidases"/>
    <property type="match status" value="1"/>
</dbReference>
<dbReference type="InterPro" id="IPR001547">
    <property type="entry name" value="Glyco_hydro_5"/>
</dbReference>
<dbReference type="InterPro" id="IPR018087">
    <property type="entry name" value="Glyco_hydro_5_CS"/>
</dbReference>
<dbReference type="InterPro" id="IPR017853">
    <property type="entry name" value="Glycoside_hydrolase_SF"/>
</dbReference>
<dbReference type="InterPro" id="IPR050386">
    <property type="entry name" value="Glycosyl_hydrolase_5"/>
</dbReference>
<dbReference type="PANTHER" id="PTHR31297:SF41">
    <property type="entry name" value="ENDOGLUCANASE, PUTATIVE (AFU_ORTHOLOGUE AFUA_5G01830)-RELATED"/>
    <property type="match status" value="1"/>
</dbReference>
<dbReference type="PANTHER" id="PTHR31297">
    <property type="entry name" value="GLUCAN ENDO-1,6-BETA-GLUCOSIDASE B"/>
    <property type="match status" value="1"/>
</dbReference>
<dbReference type="Pfam" id="PF00150">
    <property type="entry name" value="Cellulase"/>
    <property type="match status" value="1"/>
</dbReference>
<dbReference type="SUPFAM" id="SSF51445">
    <property type="entry name" value="(Trans)glycosidases"/>
    <property type="match status" value="1"/>
</dbReference>
<dbReference type="PROSITE" id="PS00659">
    <property type="entry name" value="GLYCOSYL_HYDROL_F5"/>
    <property type="match status" value="1"/>
</dbReference>
<evidence type="ECO:0000250" key="1"/>
<evidence type="ECO:0000305" key="2"/>
<accession>P16169</accession>
<feature type="chain" id="PRO_0000184052" description="Cellodextrinase A">
    <location>
        <begin position="1"/>
        <end position="336"/>
    </location>
</feature>
<feature type="active site" description="Proton donor" evidence="1">
    <location>
        <position position="141"/>
    </location>
</feature>
<reference key="1">
    <citation type="journal article" date="1990" name="Mol. Gen. Genet.">
        <title>Nucleotide sequence of the celA gene encoding a cellodextrinase of Ruminococcus flavefaciens FD-1.</title>
        <authorList>
            <person name="Wang W."/>
            <person name="Thomson J.A."/>
        </authorList>
    </citation>
    <scope>NUCLEOTIDE SEQUENCE [GENOMIC DNA]</scope>
    <source>
        <strain>FD-1</strain>
    </source>
</reference>
<reference key="2">
    <citation type="submission" date="1994-03" db="EMBL/GenBank/DDBJ databases">
        <authorList>
            <person name="Thomson J.A."/>
        </authorList>
    </citation>
    <scope>SEQUENCE REVISION</scope>
</reference>
<gene>
    <name type="primary">celA</name>
</gene>
<organism>
    <name type="scientific">Ruminococcus flavefaciens</name>
    <dbReference type="NCBI Taxonomy" id="1265"/>
    <lineage>
        <taxon>Bacteria</taxon>
        <taxon>Bacillati</taxon>
        <taxon>Bacillota</taxon>
        <taxon>Clostridia</taxon>
        <taxon>Eubacteriales</taxon>
        <taxon>Oscillospiraceae</taxon>
        <taxon>Ruminococcus</taxon>
    </lineage>
</organism>
<name>GUNA_RUMFL</name>
<keyword id="KW-0119">Carbohydrate metabolism</keyword>
<keyword id="KW-0136">Cellulose degradation</keyword>
<keyword id="KW-0326">Glycosidase</keyword>
<keyword id="KW-0378">Hydrolase</keyword>
<keyword id="KW-0624">Polysaccharide degradation</keyword>
<keyword id="KW-0964">Secreted</keyword>
<comment type="function">
    <text>Crystalline cellulose degradation.</text>
</comment>
<comment type="subcellular location">
    <subcellularLocation>
        <location>Secreted</location>
    </subcellularLocation>
    <text>Seems to be exported by a mechanism other than a leader peptide.</text>
</comment>
<comment type="similarity">
    <text evidence="2">Belongs to the glycosyl hydrolase 5 (cellulase A) family.</text>
</comment>